<name>FAS2_LACKL</name>
<accession>Q765N2</accession>
<gene>
    <name type="primary">FAS2</name>
    <name type="synonym">Sk-FAS2</name>
</gene>
<protein>
    <recommendedName>
        <fullName>Fatty acid synthase subunit alpha</fullName>
        <ecNumber>2.3.1.86</ecNumber>
    </recommendedName>
    <alternativeName>
        <fullName>p190/210</fullName>
    </alternativeName>
    <domain>
        <recommendedName>
            <fullName>Acyl carrier</fullName>
        </recommendedName>
    </domain>
    <domain>
        <recommendedName>
            <fullName>3-oxoacyl-[acyl-carrier-protein] reductase</fullName>
            <ecNumber>1.1.1.100</ecNumber>
        </recommendedName>
        <alternativeName>
            <fullName>Beta-ketoacyl reductase</fullName>
        </alternativeName>
    </domain>
    <domain>
        <recommendedName>
            <fullName>3-oxoacyl-[acyl-carrier-protein] synthase</fullName>
            <ecNumber>2.3.1.41</ecNumber>
        </recommendedName>
        <alternativeName>
            <fullName>Beta-ketoacyl synthase</fullName>
        </alternativeName>
    </domain>
</protein>
<feature type="chain" id="PRO_0000419252" description="Fatty acid synthase subunit alpha">
    <location>
        <begin position="1"/>
        <end position="1888"/>
    </location>
</feature>
<feature type="domain" description="Carrier" evidence="2">
    <location>
        <begin position="146"/>
        <end position="221"/>
    </location>
</feature>
<feature type="domain" description="Ketosynthase family 3 (KS3)" evidence="3">
    <location>
        <begin position="1119"/>
        <end position="1657"/>
    </location>
</feature>
<feature type="region of interest" description="Disordered" evidence="4">
    <location>
        <begin position="98"/>
        <end position="118"/>
    </location>
</feature>
<feature type="region of interest" description="Beta-ketoacyl reductase" evidence="1">
    <location>
        <begin position="675"/>
        <end position="874"/>
    </location>
</feature>
<feature type="active site" description="For beta-ketoacyl synthase activity" evidence="3">
    <location>
        <position position="1305"/>
    </location>
</feature>
<feature type="active site" description="For beta-ketoacyl synthase activity" evidence="3">
    <location>
        <position position="1542"/>
    </location>
</feature>
<feature type="active site" description="For beta-ketoacyl synthase activity" evidence="3">
    <location>
        <position position="1583"/>
    </location>
</feature>
<feature type="binding site" evidence="1">
    <location>
        <begin position="1774"/>
        <end position="1776"/>
    </location>
    <ligand>
        <name>acetyl-CoA</name>
        <dbReference type="ChEBI" id="CHEBI:57288"/>
    </ligand>
</feature>
<feature type="binding site" evidence="1">
    <location>
        <position position="1774"/>
    </location>
    <ligand>
        <name>Mg(2+)</name>
        <dbReference type="ChEBI" id="CHEBI:18420"/>
    </ligand>
</feature>
<feature type="binding site" evidence="1">
    <location>
        <position position="1775"/>
    </location>
    <ligand>
        <name>Mg(2+)</name>
        <dbReference type="ChEBI" id="CHEBI:18420"/>
    </ligand>
</feature>
<feature type="binding site" evidence="1">
    <location>
        <position position="1776"/>
    </location>
    <ligand>
        <name>Mg(2+)</name>
        <dbReference type="ChEBI" id="CHEBI:18420"/>
    </ligand>
</feature>
<feature type="binding site" evidence="1">
    <location>
        <position position="1800"/>
    </location>
    <ligand>
        <name>acetyl-CoA</name>
        <dbReference type="ChEBI" id="CHEBI:57288"/>
    </ligand>
</feature>
<feature type="binding site" evidence="1">
    <location>
        <position position="1810"/>
    </location>
    <ligand>
        <name>acetyl-CoA</name>
        <dbReference type="ChEBI" id="CHEBI:57288"/>
    </ligand>
</feature>
<feature type="binding site" evidence="1">
    <location>
        <begin position="1819"/>
        <end position="1829"/>
    </location>
    <ligand>
        <name>acetyl-CoA</name>
        <dbReference type="ChEBI" id="CHEBI:57288"/>
    </ligand>
</feature>
<feature type="binding site" evidence="1">
    <location>
        <begin position="1843"/>
        <end position="1846"/>
    </location>
    <ligand>
        <name>acetyl-CoA</name>
        <dbReference type="ChEBI" id="CHEBI:57288"/>
    </ligand>
</feature>
<feature type="binding site" evidence="1">
    <location>
        <begin position="1873"/>
        <end position="1875"/>
    </location>
    <ligand>
        <name>acetyl-CoA</name>
        <dbReference type="ChEBI" id="CHEBI:57288"/>
    </ligand>
</feature>
<feature type="binding site" evidence="1">
    <location>
        <position position="1874"/>
    </location>
    <ligand>
        <name>Mg(2+)</name>
        <dbReference type="ChEBI" id="CHEBI:18420"/>
    </ligand>
</feature>
<feature type="binding site" evidence="1">
    <location>
        <position position="1875"/>
    </location>
    <ligand>
        <name>Mg(2+)</name>
        <dbReference type="ChEBI" id="CHEBI:18420"/>
    </ligand>
</feature>
<feature type="modified residue" description="O-(pantetheine 4'-phosphoryl)serine" evidence="2">
    <location>
        <position position="181"/>
    </location>
</feature>
<sequence>MAMKPEVEQELAHVLLTELLAYQFASPVRWIETQDVFLKDFNTERVVEIGPSPTLAGMAQRTIKNKYESYDAALSLQRQVLCYSKDAKEIYYTPDPADLAPVEEPNAEEQTGAAATPAAAAAPAAAAAAPAAPAARPVAELPDEAVKASLLLHVLVAQKLKKSLEQVPMSKTIKDLVGGKSTVQNEILGDLGKEFGSTPEKPEETPLEELAETFQDTFAGSLGKQSSSLISRLMSSKMPGGFTITVARKYLQTRWGLGSGRQDSVLLIALTNEPASRLGGEADAKSFLDSMAQKYASISGVDLSSASAGASAGAGAGGAGGATIDAAAFEELTKDQKVMARQQLEVLARYLKMDLNGGEKKFLQEKNTVAELQSQLDYLNNELGEYFIQGISTSFSRKKARVFDSSWNWAKQALLTLYFQIIHGVLKNVDREVVTEAINIMNRSNETLIKFMEYHISHCDENNGENYKLAKTLGHQLIENCKQVLDMDPVYKDISKPTGPKTNIDKNGNIKYSEEPRAAVRKLSQYVQEMALGGPLTKESQPTIQEDLTRVYKAINAQAAEHNISDSTKLEFEKLYGELLKFLETSNEIDASATTRLAGVVDDDLDKDSTKEVASLPNKSEISKNVSSIIPRETVPFLHLKKKLPSCEWAYDRQLSTLFLDGLEKAAINGVTFKDKYVLITGAGAGSIGAEVLQGLVQGGAKVIVTTSRFSKKVTDYYQSIYAQYGAKGSTLVVVPFNQGSKQDVEALIDFIYDDEKNGGLGWDLDAVIPFAAIPENGIELDKIDSKSEFAHRIMLTNILRMLGSVKKQKSARGIETRPAQVILPLSPNHGTFGGDGMYSESKLSLETLFNRWHSESWSNQLTICGAIIGWTRGTGLMNANNIIAEGIEKMGVRTFSQKEMAFNLLGLLIPEVVNLCQRSPVMADLNGGLQFLTDLKEFTGKLRGELTETSEIRKAVSIETALEHKTVAGANADAAFAQVEVQPRANIQLEFPTLKPYETVKKIGSPDLEGLLDLEKVIVVTGFSEVGPWGSSRTRGEMEAFGEFSLEGCVEMSWIMGLIKYHNGNLKGRPYTGWVDSKTNEPVDDKDIKAKDESHVLEHSGIRLIEPELFNSYNPEKKQMIQEVVIEEDLEPFEASKETAEQFKHEHGDKVDIFEIPETGEFSVRLLKGATLYIPKALRFDRLVAGQIPTGWNAKTYGISDDTISQVDPITLFVLVSVIEAFIASGITDPYEMYKYVHVSEVGNCSGSGMGGVSALRGMFKDRYKDQPVQNDILQESFINTMSAWVNMLLISSSGPIKTPVGACATAVESLDIGVETILSGKAKICIVGGYDDFQEEGSYEFGNMNATSNSLDEFDHGRTPAEMSRPATTTRNGFMEAQGAGIQVIMNADLALKMGVPIYGILALTATATDKIGRSVPAPGKGILTTAREHHGNLKFPTPLLDIKYRKRQLKNREAQIKQWVETELEMLKYEAEGIPAEDQETFYAERTEEIKREATRQLKSAQAQWGSEFYKNDPRIAPLRGALATYGLTIDDLGVASFHGTSTKANDKNESATINEMMKHLGRSEGNPVLGVFQKYLTGHPKGAAGAWMMNGALQILNSGIVPGNRNADNVDKLLQQFEYILYPSRSLKTDGIKAVSVTSFGFGQKGAQAVAVHPDFLYAAVDEATYNAYVAKVTAREKAAYKYFHNGMIHNTLFVSKEHAPYSDELEQPVYLDPLARVSSDKKTGALVFNGKGIQSSSQFVSEENRKTATIVSELAKKTAGTDASGVGVDVELIKSINVENDTFIERNFTEAEIAYCKKQPSVQSSFAGTWSAKEAVFKSLGVKSQGGGASLKDIEITREAGKGPEVVLHGAAKEAATKANVKNVKVSISHDDFQSVAVAVSEK</sequence>
<proteinExistence type="inferred from homology"/>
<organism>
    <name type="scientific">Lachancea kluyveri</name>
    <name type="common">Yeast</name>
    <name type="synonym">Saccharomyces kluyveri</name>
    <dbReference type="NCBI Taxonomy" id="4934"/>
    <lineage>
        <taxon>Eukaryota</taxon>
        <taxon>Fungi</taxon>
        <taxon>Dikarya</taxon>
        <taxon>Ascomycota</taxon>
        <taxon>Saccharomycotina</taxon>
        <taxon>Saccharomycetes</taxon>
        <taxon>Saccharomycetales</taxon>
        <taxon>Saccharomycetaceae</taxon>
        <taxon>Lachancea</taxon>
    </lineage>
</organism>
<keyword id="KW-0275">Fatty acid biosynthesis</keyword>
<keyword id="KW-0276">Fatty acid metabolism</keyword>
<keyword id="KW-0444">Lipid biosynthesis</keyword>
<keyword id="KW-0443">Lipid metabolism</keyword>
<keyword id="KW-0460">Magnesium</keyword>
<keyword id="KW-0479">Metal-binding</keyword>
<keyword id="KW-0511">Multifunctional enzyme</keyword>
<keyword id="KW-0520">NAD</keyword>
<keyword id="KW-0521">NADP</keyword>
<keyword id="KW-0560">Oxidoreductase</keyword>
<keyword id="KW-0596">Phosphopantetheine</keyword>
<keyword id="KW-0597">Phosphoprotein</keyword>
<keyword id="KW-0808">Transferase</keyword>
<reference key="1">
    <citation type="journal article" date="2006" name="Curr. Genet.">
        <title>Cloning and functional characterization of a fatty acid synthase component FAS2 gene from Saccharomyces kluyveri.</title>
        <authorList>
            <person name="Oura T."/>
            <person name="Kajiwara S."/>
        </authorList>
    </citation>
    <scope>NUCLEOTIDE SEQUENCE [GENOMIC DNA]</scope>
    <scope>FUNCTION</scope>
    <scope>DOMAIN</scope>
    <source>
        <strain>NBRC 1893 / Ks-133(+)</strain>
    </source>
</reference>
<comment type="function">
    <text evidence="5">Fatty acid synthetase catalyzes the formation of long-chain fatty acids from acetyl-CoA, malonyl-CoA and NADPH. The alpha subunit contains domains for: acyl carrier protein, 3-oxoacyl-[acyl-carrier-protein] reductase, and 3-oxoacyl-[acyl-carrier-protein] synthase. In this species, higher amounts of C18 than C16 fatty acids are produced.</text>
</comment>
<comment type="catalytic activity">
    <reaction>
        <text>acetyl-CoA + n malonyl-CoA + 2n NADPH + 4n H(+) = a long-chain-acyl-CoA + n CoA + n CO2 + 2n NADP(+).</text>
        <dbReference type="EC" id="2.3.1.86"/>
    </reaction>
</comment>
<comment type="catalytic activity">
    <reaction>
        <text>a fatty acyl-[ACP] + malonyl-[ACP] + H(+) = a 3-oxoacyl-[ACP] + holo-[ACP] + CO2</text>
        <dbReference type="Rhea" id="RHEA:22836"/>
        <dbReference type="Rhea" id="RHEA-COMP:9623"/>
        <dbReference type="Rhea" id="RHEA-COMP:9685"/>
        <dbReference type="Rhea" id="RHEA-COMP:9916"/>
        <dbReference type="Rhea" id="RHEA-COMP:14125"/>
        <dbReference type="ChEBI" id="CHEBI:15378"/>
        <dbReference type="ChEBI" id="CHEBI:16526"/>
        <dbReference type="ChEBI" id="CHEBI:64479"/>
        <dbReference type="ChEBI" id="CHEBI:78449"/>
        <dbReference type="ChEBI" id="CHEBI:78776"/>
        <dbReference type="ChEBI" id="CHEBI:138651"/>
        <dbReference type="EC" id="2.3.1.41"/>
    </reaction>
</comment>
<comment type="catalytic activity">
    <reaction>
        <text>a (3R)-hydroxyacyl-[ACP] + NADP(+) = a 3-oxoacyl-[ACP] + NADPH + H(+)</text>
        <dbReference type="Rhea" id="RHEA:17397"/>
        <dbReference type="Rhea" id="RHEA-COMP:9916"/>
        <dbReference type="Rhea" id="RHEA-COMP:9945"/>
        <dbReference type="ChEBI" id="CHEBI:15378"/>
        <dbReference type="ChEBI" id="CHEBI:57783"/>
        <dbReference type="ChEBI" id="CHEBI:58349"/>
        <dbReference type="ChEBI" id="CHEBI:78776"/>
        <dbReference type="ChEBI" id="CHEBI:78827"/>
        <dbReference type="EC" id="1.1.1.100"/>
    </reaction>
</comment>
<comment type="subunit">
    <text evidence="1">Fatty acid synthase is composed of alpha and beta subunits.</text>
</comment>
<comment type="domain">
    <text evidence="5">The N-terminal ACP and almost all of the KR domains play an important role in determining the carbon chain length of fatty acids produced.</text>
</comment>
<comment type="similarity">
    <text evidence="6">Belongs to the thiolase-like superfamily. Fungal fatty acid synthetase subunit alpha family.</text>
</comment>
<evidence type="ECO:0000250" key="1"/>
<evidence type="ECO:0000255" key="2">
    <source>
        <dbReference type="PROSITE-ProRule" id="PRU00258"/>
    </source>
</evidence>
<evidence type="ECO:0000255" key="3">
    <source>
        <dbReference type="PROSITE-ProRule" id="PRU01348"/>
    </source>
</evidence>
<evidence type="ECO:0000256" key="4">
    <source>
        <dbReference type="SAM" id="MobiDB-lite"/>
    </source>
</evidence>
<evidence type="ECO:0000269" key="5">
    <source>
    </source>
</evidence>
<evidence type="ECO:0000305" key="6"/>
<dbReference type="EC" id="2.3.1.86"/>
<dbReference type="EC" id="1.1.1.100"/>
<dbReference type="EC" id="2.3.1.41"/>
<dbReference type="EMBL" id="AB115969">
    <property type="protein sequence ID" value="BAD08376.1"/>
    <property type="molecule type" value="Genomic_DNA"/>
</dbReference>
<dbReference type="SMR" id="Q765N2"/>
<dbReference type="BRENDA" id="2.3.1.86">
    <property type="organism ID" value="6897"/>
</dbReference>
<dbReference type="GO" id="GO:0005835">
    <property type="term" value="C:fatty acid synthase complex"/>
    <property type="evidence" value="ECO:0007669"/>
    <property type="project" value="InterPro"/>
</dbReference>
<dbReference type="GO" id="GO:0004316">
    <property type="term" value="F:3-oxoacyl-[acyl-carrier-protein] reductase (NADPH) activity"/>
    <property type="evidence" value="ECO:0007669"/>
    <property type="project" value="UniProtKB-EC"/>
</dbReference>
<dbReference type="GO" id="GO:0004315">
    <property type="term" value="F:3-oxoacyl-[acyl-carrier-protein] synthase activity"/>
    <property type="evidence" value="ECO:0007669"/>
    <property type="project" value="UniProtKB-EC"/>
</dbReference>
<dbReference type="GO" id="GO:0004312">
    <property type="term" value="F:fatty acid synthase activity"/>
    <property type="evidence" value="ECO:0007669"/>
    <property type="project" value="InterPro"/>
</dbReference>
<dbReference type="GO" id="GO:0004321">
    <property type="term" value="F:fatty-acyl-CoA synthase activity"/>
    <property type="evidence" value="ECO:0007669"/>
    <property type="project" value="UniProtKB-EC"/>
</dbReference>
<dbReference type="GO" id="GO:0008897">
    <property type="term" value="F:holo-[acyl-carrier-protein] synthase activity"/>
    <property type="evidence" value="ECO:0007669"/>
    <property type="project" value="InterPro"/>
</dbReference>
<dbReference type="GO" id="GO:0000287">
    <property type="term" value="F:magnesium ion binding"/>
    <property type="evidence" value="ECO:0007669"/>
    <property type="project" value="InterPro"/>
</dbReference>
<dbReference type="GO" id="GO:0042759">
    <property type="term" value="P:long-chain fatty acid biosynthetic process"/>
    <property type="evidence" value="ECO:0007669"/>
    <property type="project" value="InterPro"/>
</dbReference>
<dbReference type="CDD" id="cd00828">
    <property type="entry name" value="elong_cond_enzymes"/>
    <property type="match status" value="1"/>
</dbReference>
<dbReference type="CDD" id="cd08950">
    <property type="entry name" value="KR_fFAS_SDR_c_like"/>
    <property type="match status" value="1"/>
</dbReference>
<dbReference type="FunFam" id="3.90.470.20:FF:000005">
    <property type="entry name" value="Fatty acid synthase alpha subunit FasA"/>
    <property type="match status" value="1"/>
</dbReference>
<dbReference type="FunFam" id="3.30.70.2490:FF:000001">
    <property type="entry name" value="Fatty acid synthase subunit alpha"/>
    <property type="match status" value="1"/>
</dbReference>
<dbReference type="FunFam" id="3.90.25.70:FF:000001">
    <property type="entry name" value="Fatty acid synthase subunit alpha"/>
    <property type="match status" value="1"/>
</dbReference>
<dbReference type="Gene3D" id="3.30.70.2490">
    <property type="match status" value="1"/>
</dbReference>
<dbReference type="Gene3D" id="3.40.47.10">
    <property type="match status" value="1"/>
</dbReference>
<dbReference type="Gene3D" id="3.90.25.70">
    <property type="match status" value="1"/>
</dbReference>
<dbReference type="Gene3D" id="6.10.140.1390">
    <property type="match status" value="1"/>
</dbReference>
<dbReference type="Gene3D" id="6.10.140.1410">
    <property type="match status" value="1"/>
</dbReference>
<dbReference type="Gene3D" id="6.10.250.1930">
    <property type="match status" value="1"/>
</dbReference>
<dbReference type="Gene3D" id="3.90.470.20">
    <property type="entry name" value="4'-phosphopantetheinyl transferase domain"/>
    <property type="match status" value="1"/>
</dbReference>
<dbReference type="Gene3D" id="3.40.50.720">
    <property type="entry name" value="NAD(P)-binding Rossmann-like Domain"/>
    <property type="match status" value="1"/>
</dbReference>
<dbReference type="HAMAP" id="MF_00101">
    <property type="entry name" value="AcpS"/>
    <property type="match status" value="1"/>
</dbReference>
<dbReference type="InterPro" id="IPR008278">
    <property type="entry name" value="4-PPantetheinyl_Trfase_dom"/>
</dbReference>
<dbReference type="InterPro" id="IPR037143">
    <property type="entry name" value="4-PPantetheinyl_Trfase_dom_sf"/>
</dbReference>
<dbReference type="InterPro" id="IPR002582">
    <property type="entry name" value="ACPS"/>
</dbReference>
<dbReference type="InterPro" id="IPR016035">
    <property type="entry name" value="Acyl_Trfase/lysoPLipase"/>
</dbReference>
<dbReference type="InterPro" id="IPR040899">
    <property type="entry name" value="Fas_alpha_ACP"/>
</dbReference>
<dbReference type="InterPro" id="IPR047224">
    <property type="entry name" value="FAS_alpha_su_C"/>
</dbReference>
<dbReference type="InterPro" id="IPR026025">
    <property type="entry name" value="FAS_alpha_yeast"/>
</dbReference>
<dbReference type="InterPro" id="IPR041550">
    <property type="entry name" value="FASI_helical"/>
</dbReference>
<dbReference type="InterPro" id="IPR050830">
    <property type="entry name" value="Fungal_FAS"/>
</dbReference>
<dbReference type="InterPro" id="IPR018201">
    <property type="entry name" value="Ketoacyl_synth_AS"/>
</dbReference>
<dbReference type="InterPro" id="IPR014031">
    <property type="entry name" value="Ketoacyl_synth_C"/>
</dbReference>
<dbReference type="InterPro" id="IPR014030">
    <property type="entry name" value="Ketoacyl_synth_N"/>
</dbReference>
<dbReference type="InterPro" id="IPR036291">
    <property type="entry name" value="NAD(P)-bd_dom_sf"/>
</dbReference>
<dbReference type="InterPro" id="IPR020841">
    <property type="entry name" value="PKS_Beta-ketoAc_synthase_dom"/>
</dbReference>
<dbReference type="InterPro" id="IPR009081">
    <property type="entry name" value="PP-bd_ACP"/>
</dbReference>
<dbReference type="InterPro" id="IPR004568">
    <property type="entry name" value="Ppantetheine-prot_Trfase_dom"/>
</dbReference>
<dbReference type="InterPro" id="IPR016039">
    <property type="entry name" value="Thiolase-like"/>
</dbReference>
<dbReference type="NCBIfam" id="TIGR00556">
    <property type="entry name" value="pantethn_trn"/>
    <property type="match status" value="1"/>
</dbReference>
<dbReference type="PANTHER" id="PTHR10982:SF21">
    <property type="entry name" value="FATTY ACID SYNTHASE SUBUNIT BETA"/>
    <property type="match status" value="1"/>
</dbReference>
<dbReference type="PANTHER" id="PTHR10982">
    <property type="entry name" value="MALONYL COA-ACYL CARRIER PROTEIN TRANSACYLASE"/>
    <property type="match status" value="1"/>
</dbReference>
<dbReference type="Pfam" id="PF01648">
    <property type="entry name" value="ACPS"/>
    <property type="match status" value="1"/>
</dbReference>
<dbReference type="Pfam" id="PF18325">
    <property type="entry name" value="Fas_alpha_ACP"/>
    <property type="match status" value="1"/>
</dbReference>
<dbReference type="Pfam" id="PF18314">
    <property type="entry name" value="FAS_I_H"/>
    <property type="match status" value="1"/>
</dbReference>
<dbReference type="Pfam" id="PF00109">
    <property type="entry name" value="ketoacyl-synt"/>
    <property type="match status" value="1"/>
</dbReference>
<dbReference type="Pfam" id="PF02801">
    <property type="entry name" value="Ketoacyl-synt_C"/>
    <property type="match status" value="1"/>
</dbReference>
<dbReference type="PIRSF" id="PIRSF000454">
    <property type="entry name" value="FAS_yeast_alpha"/>
    <property type="match status" value="1"/>
</dbReference>
<dbReference type="SUPFAM" id="SSF56214">
    <property type="entry name" value="4'-phosphopantetheinyl transferase"/>
    <property type="match status" value="1"/>
</dbReference>
<dbReference type="SUPFAM" id="SSF52151">
    <property type="entry name" value="FabD/lysophospholipase-like"/>
    <property type="match status" value="1"/>
</dbReference>
<dbReference type="SUPFAM" id="SSF51735">
    <property type="entry name" value="NAD(P)-binding Rossmann-fold domains"/>
    <property type="match status" value="1"/>
</dbReference>
<dbReference type="SUPFAM" id="SSF53901">
    <property type="entry name" value="Thiolase-like"/>
    <property type="match status" value="2"/>
</dbReference>
<dbReference type="PROSITE" id="PS50075">
    <property type="entry name" value="CARRIER"/>
    <property type="match status" value="1"/>
</dbReference>
<dbReference type="PROSITE" id="PS00606">
    <property type="entry name" value="KS3_1"/>
    <property type="match status" value="1"/>
</dbReference>
<dbReference type="PROSITE" id="PS52004">
    <property type="entry name" value="KS3_2"/>
    <property type="match status" value="1"/>
</dbReference>
<dbReference type="PROSITE" id="PS00012">
    <property type="entry name" value="PHOSPHOPANTETHEINE"/>
    <property type="match status" value="1"/>
</dbReference>